<feature type="chain" id="PRO_1000052224" description="Large ribosomal subunit protein uL24">
    <location>
        <begin position="1"/>
        <end position="105"/>
    </location>
</feature>
<protein>
    <recommendedName>
        <fullName evidence="1">Large ribosomal subunit protein uL24</fullName>
    </recommendedName>
    <alternativeName>
        <fullName evidence="2">50S ribosomal protein L24</fullName>
    </alternativeName>
</protein>
<keyword id="KW-1185">Reference proteome</keyword>
<keyword id="KW-0687">Ribonucleoprotein</keyword>
<keyword id="KW-0689">Ribosomal protein</keyword>
<keyword id="KW-0694">RNA-binding</keyword>
<keyword id="KW-0699">rRNA-binding</keyword>
<comment type="function">
    <text evidence="1">One of two assembly initiator proteins, it binds directly to the 5'-end of the 23S rRNA, where it nucleates assembly of the 50S subunit.</text>
</comment>
<comment type="function">
    <text evidence="1">One of the proteins that surrounds the polypeptide exit tunnel on the outside of the subunit.</text>
</comment>
<comment type="subunit">
    <text evidence="1">Part of the 50S ribosomal subunit.</text>
</comment>
<comment type="similarity">
    <text evidence="1">Belongs to the universal ribosomal protein uL24 family.</text>
</comment>
<evidence type="ECO:0000255" key="1">
    <source>
        <dbReference type="HAMAP-Rule" id="MF_01326"/>
    </source>
</evidence>
<evidence type="ECO:0000305" key="2"/>
<name>RL24_HALHL</name>
<proteinExistence type="inferred from homology"/>
<gene>
    <name evidence="1" type="primary">rplX</name>
    <name type="ordered locus">Hhal_0847</name>
</gene>
<reference key="1">
    <citation type="submission" date="2006-12" db="EMBL/GenBank/DDBJ databases">
        <title>Complete sequence of Halorhodospira halophila SL1.</title>
        <authorList>
            <consortium name="US DOE Joint Genome Institute"/>
            <person name="Copeland A."/>
            <person name="Lucas S."/>
            <person name="Lapidus A."/>
            <person name="Barry K."/>
            <person name="Detter J.C."/>
            <person name="Glavina del Rio T."/>
            <person name="Hammon N."/>
            <person name="Israni S."/>
            <person name="Dalin E."/>
            <person name="Tice H."/>
            <person name="Pitluck S."/>
            <person name="Saunders E."/>
            <person name="Brettin T."/>
            <person name="Bruce D."/>
            <person name="Han C."/>
            <person name="Tapia R."/>
            <person name="Schmutz J."/>
            <person name="Larimer F."/>
            <person name="Land M."/>
            <person name="Hauser L."/>
            <person name="Kyrpides N."/>
            <person name="Mikhailova N."/>
            <person name="Hoff W."/>
            <person name="Richardson P."/>
        </authorList>
    </citation>
    <scope>NUCLEOTIDE SEQUENCE [LARGE SCALE GENOMIC DNA]</scope>
    <source>
        <strain>DSM 244 / SL1</strain>
    </source>
</reference>
<organism>
    <name type="scientific">Halorhodospira halophila (strain DSM 244 / SL1)</name>
    <name type="common">Ectothiorhodospira halophila (strain DSM 244 / SL1)</name>
    <dbReference type="NCBI Taxonomy" id="349124"/>
    <lineage>
        <taxon>Bacteria</taxon>
        <taxon>Pseudomonadati</taxon>
        <taxon>Pseudomonadota</taxon>
        <taxon>Gammaproteobacteria</taxon>
        <taxon>Chromatiales</taxon>
        <taxon>Ectothiorhodospiraceae</taxon>
        <taxon>Halorhodospira</taxon>
    </lineage>
</organism>
<dbReference type="EMBL" id="CP000544">
    <property type="protein sequence ID" value="ABM61623.1"/>
    <property type="molecule type" value="Genomic_DNA"/>
</dbReference>
<dbReference type="RefSeq" id="WP_011813646.1">
    <property type="nucleotide sequence ID" value="NC_008789.1"/>
</dbReference>
<dbReference type="SMR" id="A1WVB1"/>
<dbReference type="STRING" id="349124.Hhal_0847"/>
<dbReference type="KEGG" id="hha:Hhal_0847"/>
<dbReference type="eggNOG" id="COG0198">
    <property type="taxonomic scope" value="Bacteria"/>
</dbReference>
<dbReference type="HOGENOM" id="CLU_093315_2_2_6"/>
<dbReference type="OrthoDB" id="9807419at2"/>
<dbReference type="Proteomes" id="UP000000647">
    <property type="component" value="Chromosome"/>
</dbReference>
<dbReference type="GO" id="GO:1990904">
    <property type="term" value="C:ribonucleoprotein complex"/>
    <property type="evidence" value="ECO:0007669"/>
    <property type="project" value="UniProtKB-KW"/>
</dbReference>
<dbReference type="GO" id="GO:0005840">
    <property type="term" value="C:ribosome"/>
    <property type="evidence" value="ECO:0007669"/>
    <property type="project" value="UniProtKB-KW"/>
</dbReference>
<dbReference type="GO" id="GO:0019843">
    <property type="term" value="F:rRNA binding"/>
    <property type="evidence" value="ECO:0007669"/>
    <property type="project" value="UniProtKB-UniRule"/>
</dbReference>
<dbReference type="GO" id="GO:0003735">
    <property type="term" value="F:structural constituent of ribosome"/>
    <property type="evidence" value="ECO:0007669"/>
    <property type="project" value="InterPro"/>
</dbReference>
<dbReference type="GO" id="GO:0006412">
    <property type="term" value="P:translation"/>
    <property type="evidence" value="ECO:0007669"/>
    <property type="project" value="UniProtKB-UniRule"/>
</dbReference>
<dbReference type="CDD" id="cd06089">
    <property type="entry name" value="KOW_RPL26"/>
    <property type="match status" value="1"/>
</dbReference>
<dbReference type="FunFam" id="2.30.30.30:FF:000004">
    <property type="entry name" value="50S ribosomal protein L24"/>
    <property type="match status" value="1"/>
</dbReference>
<dbReference type="Gene3D" id="2.30.30.30">
    <property type="match status" value="1"/>
</dbReference>
<dbReference type="HAMAP" id="MF_01326_B">
    <property type="entry name" value="Ribosomal_uL24_B"/>
    <property type="match status" value="1"/>
</dbReference>
<dbReference type="InterPro" id="IPR005824">
    <property type="entry name" value="KOW"/>
</dbReference>
<dbReference type="InterPro" id="IPR014722">
    <property type="entry name" value="Rib_uL2_dom2"/>
</dbReference>
<dbReference type="InterPro" id="IPR003256">
    <property type="entry name" value="Ribosomal_uL24"/>
</dbReference>
<dbReference type="InterPro" id="IPR005825">
    <property type="entry name" value="Ribosomal_uL24_CS"/>
</dbReference>
<dbReference type="InterPro" id="IPR041988">
    <property type="entry name" value="Ribosomal_uL24_KOW"/>
</dbReference>
<dbReference type="InterPro" id="IPR008991">
    <property type="entry name" value="Translation_prot_SH3-like_sf"/>
</dbReference>
<dbReference type="NCBIfam" id="TIGR01079">
    <property type="entry name" value="rplX_bact"/>
    <property type="match status" value="1"/>
</dbReference>
<dbReference type="PANTHER" id="PTHR12903">
    <property type="entry name" value="MITOCHONDRIAL RIBOSOMAL PROTEIN L24"/>
    <property type="match status" value="1"/>
</dbReference>
<dbReference type="Pfam" id="PF00467">
    <property type="entry name" value="KOW"/>
    <property type="match status" value="1"/>
</dbReference>
<dbReference type="Pfam" id="PF17136">
    <property type="entry name" value="ribosomal_L24"/>
    <property type="match status" value="1"/>
</dbReference>
<dbReference type="SMART" id="SM00739">
    <property type="entry name" value="KOW"/>
    <property type="match status" value="1"/>
</dbReference>
<dbReference type="SUPFAM" id="SSF50104">
    <property type="entry name" value="Translation proteins SH3-like domain"/>
    <property type="match status" value="1"/>
</dbReference>
<dbReference type="PROSITE" id="PS01108">
    <property type="entry name" value="RIBOSOMAL_L24"/>
    <property type="match status" value="1"/>
</dbReference>
<accession>A1WVB1</accession>
<sequence length="105" mass="11879">MRKIRTGDEVIVIAGKDKGRRGRVSRVIPEKDRVIVDNVNMVKRHTRGNPMQGTTGGIIEKEAPIHISNVAIYNPETEKADRVGVRQEGDRKVRYFKSNQQLIDA</sequence>